<evidence type="ECO:0000255" key="1">
    <source>
        <dbReference type="HAMAP-Rule" id="MF_00707"/>
    </source>
</evidence>
<proteinExistence type="inferred from homology"/>
<name>Y1404_CLOPS</name>
<sequence length="145" mass="16339">MEGNLLVIDKRVLPEVFEKVINAKRLLKEGKVKEITEATKQAGISRSVYYKYKDYIFEFAETLQGRKVIFNMVVTHEKGVLSSVLNILSDVGGNILTIDQGLPIHGLAHVSFTIDISTMKCDIKEMLNEIELVHGVEKVEFVAME</sequence>
<dbReference type="EMBL" id="CP000312">
    <property type="protein sequence ID" value="ABG86076.1"/>
    <property type="molecule type" value="Genomic_DNA"/>
</dbReference>
<dbReference type="RefSeq" id="WP_003463812.1">
    <property type="nucleotide sequence ID" value="NC_008262.1"/>
</dbReference>
<dbReference type="KEGG" id="cpr:CPR_1404"/>
<dbReference type="BioCyc" id="CPER289380:GI76-1417-MONOMER"/>
<dbReference type="Proteomes" id="UP000001824">
    <property type="component" value="Chromosome"/>
</dbReference>
<dbReference type="CDD" id="cd04888">
    <property type="entry name" value="ACT_PheB-BS"/>
    <property type="match status" value="1"/>
</dbReference>
<dbReference type="Gene3D" id="3.30.70.260">
    <property type="match status" value="1"/>
</dbReference>
<dbReference type="HAMAP" id="MF_00707">
    <property type="entry name" value="UPF0735"/>
    <property type="match status" value="1"/>
</dbReference>
<dbReference type="InterPro" id="IPR045865">
    <property type="entry name" value="ACT-like_dom_sf"/>
</dbReference>
<dbReference type="InterPro" id="IPR002912">
    <property type="entry name" value="ACT_dom"/>
</dbReference>
<dbReference type="InterPro" id="IPR008310">
    <property type="entry name" value="UPF0735_ACT_dom-cont"/>
</dbReference>
<dbReference type="NCBIfam" id="NF003361">
    <property type="entry name" value="PRK04435.1"/>
    <property type="match status" value="1"/>
</dbReference>
<dbReference type="PIRSF" id="PIRSF025624">
    <property type="entry name" value="ACT_PheB"/>
    <property type="match status" value="1"/>
</dbReference>
<dbReference type="SUPFAM" id="SSF55021">
    <property type="entry name" value="ACT-like"/>
    <property type="match status" value="1"/>
</dbReference>
<dbReference type="PROSITE" id="PS51671">
    <property type="entry name" value="ACT"/>
    <property type="match status" value="1"/>
</dbReference>
<reference key="1">
    <citation type="journal article" date="2006" name="Genome Res.">
        <title>Skewed genomic variability in strains of the toxigenic bacterial pathogen, Clostridium perfringens.</title>
        <authorList>
            <person name="Myers G.S.A."/>
            <person name="Rasko D.A."/>
            <person name="Cheung J.K."/>
            <person name="Ravel J."/>
            <person name="Seshadri R."/>
            <person name="DeBoy R.T."/>
            <person name="Ren Q."/>
            <person name="Varga J."/>
            <person name="Awad M.M."/>
            <person name="Brinkac L.M."/>
            <person name="Daugherty S.C."/>
            <person name="Haft D.H."/>
            <person name="Dodson R.J."/>
            <person name="Madupu R."/>
            <person name="Nelson W.C."/>
            <person name="Rosovitz M.J."/>
            <person name="Sullivan S.A."/>
            <person name="Khouri H."/>
            <person name="Dimitrov G.I."/>
            <person name="Watkins K.L."/>
            <person name="Mulligan S."/>
            <person name="Benton J."/>
            <person name="Radune D."/>
            <person name="Fisher D.J."/>
            <person name="Atkins H.S."/>
            <person name="Hiscox T."/>
            <person name="Jost B.H."/>
            <person name="Billington S.J."/>
            <person name="Songer J.G."/>
            <person name="McClane B.A."/>
            <person name="Titball R.W."/>
            <person name="Rood J.I."/>
            <person name="Melville S.B."/>
            <person name="Paulsen I.T."/>
        </authorList>
    </citation>
    <scope>NUCLEOTIDE SEQUENCE [LARGE SCALE GENOMIC DNA]</scope>
    <source>
        <strain>SM101 / Type A</strain>
    </source>
</reference>
<comment type="similarity">
    <text evidence="1">Belongs to the UPF0735 family.</text>
</comment>
<gene>
    <name type="ordered locus">CPR_1404</name>
</gene>
<feature type="chain" id="PRO_0000366308" description="UPF0735 ACT domain-containing protein CPR_1404">
    <location>
        <begin position="1"/>
        <end position="145"/>
    </location>
</feature>
<feature type="domain" description="ACT" evidence="1">
    <location>
        <begin position="69"/>
        <end position="144"/>
    </location>
</feature>
<accession>Q0ST34</accession>
<protein>
    <recommendedName>
        <fullName evidence="1">UPF0735 ACT domain-containing protein CPR_1404</fullName>
    </recommendedName>
</protein>
<organism>
    <name type="scientific">Clostridium perfringens (strain SM101 / Type A)</name>
    <dbReference type="NCBI Taxonomy" id="289380"/>
    <lineage>
        <taxon>Bacteria</taxon>
        <taxon>Bacillati</taxon>
        <taxon>Bacillota</taxon>
        <taxon>Clostridia</taxon>
        <taxon>Eubacteriales</taxon>
        <taxon>Clostridiaceae</taxon>
        <taxon>Clostridium</taxon>
    </lineage>
</organism>